<organism>
    <name type="scientific">Caenorhabditis elegans</name>
    <dbReference type="NCBI Taxonomy" id="6239"/>
    <lineage>
        <taxon>Eukaryota</taxon>
        <taxon>Metazoa</taxon>
        <taxon>Ecdysozoa</taxon>
        <taxon>Nematoda</taxon>
        <taxon>Chromadorea</taxon>
        <taxon>Rhabditida</taxon>
        <taxon>Rhabditina</taxon>
        <taxon>Rhabditomorpha</taxon>
        <taxon>Rhabditoidea</taxon>
        <taxon>Rhabditidae</taxon>
        <taxon>Peloderinae</taxon>
        <taxon>Caenorhabditis</taxon>
    </lineage>
</organism>
<dbReference type="EC" id="2.3.1.50"/>
<dbReference type="EMBL" id="Z81127">
    <property type="protein sequence ID" value="CAB03390.2"/>
    <property type="molecule type" value="Genomic_DNA"/>
</dbReference>
<dbReference type="EMBL" id="Z81127">
    <property type="protein sequence ID" value="CCG28222.1"/>
    <property type="molecule type" value="Genomic_DNA"/>
</dbReference>
<dbReference type="PIR" id="T25126">
    <property type="entry name" value="T25126"/>
</dbReference>
<dbReference type="RefSeq" id="NP_001256547.1">
    <molecule id="Q9XVI6-2"/>
    <property type="nucleotide sequence ID" value="NM_001269618.3"/>
</dbReference>
<dbReference type="RefSeq" id="NP_001256548.1">
    <molecule id="Q9XVI6-1"/>
    <property type="nucleotide sequence ID" value="NM_001269619.3"/>
</dbReference>
<dbReference type="SMR" id="Q9XVI6"/>
<dbReference type="BioGRID" id="44898">
    <property type="interactions" value="3"/>
</dbReference>
<dbReference type="DIP" id="DIP-26788N"/>
<dbReference type="FunCoup" id="Q9XVI6">
    <property type="interactions" value="330"/>
</dbReference>
<dbReference type="IntAct" id="Q9XVI6">
    <property type="interactions" value="1"/>
</dbReference>
<dbReference type="STRING" id="6239.T22G5.5b.1"/>
<dbReference type="PaxDb" id="6239-T22G5.5b"/>
<dbReference type="PeptideAtlas" id="Q9XVI6"/>
<dbReference type="EnsemblMetazoa" id="T22G5.5a.1">
    <molecule id="Q9XVI6-1"/>
    <property type="protein sequence ID" value="T22G5.5a.1"/>
    <property type="gene ID" value="WBGene00011932"/>
</dbReference>
<dbReference type="EnsemblMetazoa" id="T22G5.5b.1">
    <molecule id="Q9XVI6-2"/>
    <property type="protein sequence ID" value="T22G5.5b.1"/>
    <property type="gene ID" value="WBGene00011932"/>
</dbReference>
<dbReference type="GeneID" id="179884"/>
<dbReference type="KEGG" id="cel:CELE_T22G5.5"/>
<dbReference type="UCSC" id="T22G5.5.1">
    <molecule id="Q9XVI6-1"/>
    <property type="organism name" value="c. elegans"/>
</dbReference>
<dbReference type="AGR" id="WB:WBGene00011932"/>
<dbReference type="CTD" id="179884"/>
<dbReference type="WormBase" id="T22G5.5a">
    <molecule id="Q9XVI6-1"/>
    <property type="protein sequence ID" value="CE31996"/>
    <property type="gene ID" value="WBGene00011932"/>
    <property type="gene designation" value="sptl-3"/>
</dbReference>
<dbReference type="WormBase" id="T22G5.5b">
    <molecule id="Q9XVI6-2"/>
    <property type="protein sequence ID" value="CE47328"/>
    <property type="gene ID" value="WBGene00011932"/>
    <property type="gene designation" value="sptl-3"/>
</dbReference>
<dbReference type="eggNOG" id="KOG1357">
    <property type="taxonomic scope" value="Eukaryota"/>
</dbReference>
<dbReference type="HOGENOM" id="CLU_015846_7_2_1"/>
<dbReference type="InParanoid" id="Q9XVI6"/>
<dbReference type="OMA" id="DATYTDH"/>
<dbReference type="OrthoDB" id="65434at2759"/>
<dbReference type="PhylomeDB" id="Q9XVI6"/>
<dbReference type="UniPathway" id="UPA00222"/>
<dbReference type="PRO" id="PR:Q9XVI6"/>
<dbReference type="Proteomes" id="UP000001940">
    <property type="component" value="Chromosome V"/>
</dbReference>
<dbReference type="Bgee" id="WBGene00011932">
    <property type="expression patterns" value="Expressed in larva and 4 other cell types or tissues"/>
</dbReference>
<dbReference type="GO" id="GO:0016020">
    <property type="term" value="C:membrane"/>
    <property type="evidence" value="ECO:0007669"/>
    <property type="project" value="GOC"/>
</dbReference>
<dbReference type="GO" id="GO:0017059">
    <property type="term" value="C:serine palmitoyltransferase complex"/>
    <property type="evidence" value="ECO:0000318"/>
    <property type="project" value="GO_Central"/>
</dbReference>
<dbReference type="GO" id="GO:0030170">
    <property type="term" value="F:pyridoxal phosphate binding"/>
    <property type="evidence" value="ECO:0007669"/>
    <property type="project" value="InterPro"/>
</dbReference>
<dbReference type="GO" id="GO:0004758">
    <property type="term" value="F:serine C-palmitoyltransferase activity"/>
    <property type="evidence" value="ECO:0000318"/>
    <property type="project" value="GO_Central"/>
</dbReference>
<dbReference type="GO" id="GO:0046513">
    <property type="term" value="P:ceramide biosynthetic process"/>
    <property type="evidence" value="ECO:0000318"/>
    <property type="project" value="GO_Central"/>
</dbReference>
<dbReference type="GO" id="GO:0046512">
    <property type="term" value="P:sphingosine biosynthetic process"/>
    <property type="evidence" value="ECO:0000318"/>
    <property type="project" value="GO_Central"/>
</dbReference>
<dbReference type="CDD" id="cd06454">
    <property type="entry name" value="KBL_like"/>
    <property type="match status" value="1"/>
</dbReference>
<dbReference type="Gene3D" id="3.90.1150.10">
    <property type="entry name" value="Aspartate Aminotransferase, domain 1"/>
    <property type="match status" value="1"/>
</dbReference>
<dbReference type="Gene3D" id="3.40.640.10">
    <property type="entry name" value="Type I PLP-dependent aspartate aminotransferase-like (Major domain)"/>
    <property type="match status" value="1"/>
</dbReference>
<dbReference type="InterPro" id="IPR001917">
    <property type="entry name" value="Aminotrans_II_pyridoxalP_BS"/>
</dbReference>
<dbReference type="InterPro" id="IPR004839">
    <property type="entry name" value="Aminotransferase_I/II_large"/>
</dbReference>
<dbReference type="InterPro" id="IPR050087">
    <property type="entry name" value="AON_synthase_class-II"/>
</dbReference>
<dbReference type="InterPro" id="IPR015424">
    <property type="entry name" value="PyrdxlP-dep_Trfase"/>
</dbReference>
<dbReference type="InterPro" id="IPR015421">
    <property type="entry name" value="PyrdxlP-dep_Trfase_major"/>
</dbReference>
<dbReference type="InterPro" id="IPR015422">
    <property type="entry name" value="PyrdxlP-dep_Trfase_small"/>
</dbReference>
<dbReference type="PANTHER" id="PTHR13693">
    <property type="entry name" value="CLASS II AMINOTRANSFERASE/8-AMINO-7-OXONONANOATE SYNTHASE"/>
    <property type="match status" value="1"/>
</dbReference>
<dbReference type="PANTHER" id="PTHR13693:SF54">
    <property type="entry name" value="SERINE PALMITOYLTRANSFERASE 3"/>
    <property type="match status" value="1"/>
</dbReference>
<dbReference type="Pfam" id="PF00155">
    <property type="entry name" value="Aminotran_1_2"/>
    <property type="match status" value="1"/>
</dbReference>
<dbReference type="SUPFAM" id="SSF53383">
    <property type="entry name" value="PLP-dependent transferases"/>
    <property type="match status" value="1"/>
</dbReference>
<dbReference type="PROSITE" id="PS00599">
    <property type="entry name" value="AA_TRANSFER_CLASS_2"/>
    <property type="match status" value="1"/>
</dbReference>
<comment type="function">
    <text evidence="1 2">Component of the serine palmitoyltransferase (SPT) that catalyzes the first committed step in sphingolipid biosynthesis, which is the condensation of an acyl-CoA species and L-serine. The catalytic core is composed of a heterodimer of sptl-1 and sptl-2 or sptl-1 and sptl-3 (By similarity). Required for the specification of abicobasal polarity and development of the gut lumen.</text>
</comment>
<comment type="catalytic activity">
    <reaction>
        <text>L-serine + hexadecanoyl-CoA + H(+) = 3-oxosphinganine + CO2 + CoA</text>
        <dbReference type="Rhea" id="RHEA:14761"/>
        <dbReference type="ChEBI" id="CHEBI:15378"/>
        <dbReference type="ChEBI" id="CHEBI:16526"/>
        <dbReference type="ChEBI" id="CHEBI:33384"/>
        <dbReference type="ChEBI" id="CHEBI:57287"/>
        <dbReference type="ChEBI" id="CHEBI:57379"/>
        <dbReference type="ChEBI" id="CHEBI:58299"/>
        <dbReference type="EC" id="2.3.1.50"/>
    </reaction>
</comment>
<comment type="cofactor">
    <cofactor evidence="1">
        <name>pyridoxal 5'-phosphate</name>
        <dbReference type="ChEBI" id="CHEBI:597326"/>
    </cofactor>
</comment>
<comment type="pathway">
    <text>Lipid metabolism; sphingolipid metabolism.</text>
</comment>
<comment type="subunit">
    <text evidence="1">Heterodimer of sptl-1/sptl-3.</text>
</comment>
<comment type="alternative products">
    <event type="alternative splicing"/>
    <isoform>
        <id>Q9XVI6-1</id>
        <name>a</name>
        <sequence type="displayed"/>
    </isoform>
    <isoform>
        <id>Q9XVI6-2</id>
        <name>b</name>
        <sequence type="described" ref="VSP_045380"/>
    </isoform>
</comment>
<comment type="similarity">
    <text evidence="3">Belongs to the class-II pyridoxal-phosphate-dependent aminotransferase family.</text>
</comment>
<evidence type="ECO:0000250" key="1"/>
<evidence type="ECO:0000269" key="2">
    <source>
    </source>
</evidence>
<evidence type="ECO:0000305" key="3"/>
<name>SPTC3_CAEEL</name>
<proteinExistence type="inferred from homology"/>
<sequence>MGGTQNGKAVANGKAKNGNITEKVIKLDPCPKPAFYVFWLVQLNITMMLVGAMVATLFDKWGIVKTKRSKGDPRMESFQPLGNSFDATYTDHIYRQSTDVVNRPISGVPGAIVRLKDRYTDDHGWTQKYTGTESEVINLGSYNYLGFSHRSGVCAEAAAAHIDKYGINCGGSRQEIGNHVAHKSVESTIAQYLNVEDAIVFPMGFATNSMNIPSLVDKGSLILSDRLNHASLVTGCRLSGAHTVVFRHNDASDCERKLRDALCGVSPKTGEKYNKVLIIIEGIYSMEGTIVNLPAFIAVKKKYNCYLFLDEAHSIGAVGPSGRGVAEYWGCNPRDIDIMMGTLTKSFASAGGYMGGSKKVIDHIRRYSAGTCYGVTMSPPLIAQVERAVLIMSGKDGTDIGRQKAIQLLENSRYFRKELRKRGFLVYGNNDSPVVPLMTFYITKVVEFSRRMLKHNIGIVAVGYPATPLLEARVRFCLSADHTKEHLDYILEAVEQVGMETGTFYGTKIVDE</sequence>
<keyword id="KW-0012">Acyltransferase</keyword>
<keyword id="KW-0025">Alternative splicing</keyword>
<keyword id="KW-0443">Lipid metabolism</keyword>
<keyword id="KW-0663">Pyridoxal phosphate</keyword>
<keyword id="KW-1185">Reference proteome</keyword>
<keyword id="KW-0746">Sphingolipid metabolism</keyword>
<keyword id="KW-0808">Transferase</keyword>
<protein>
    <recommendedName>
        <fullName>Serine palmitoyltransferase 3</fullName>
        <ecNumber>2.3.1.50</ecNumber>
    </recommendedName>
    <alternativeName>
        <fullName>Long chain base biosynthesis protein 3</fullName>
        <shortName>LCB 3</shortName>
    </alternativeName>
    <alternativeName>
        <fullName>Serine-palmitoyl-CoA transferase 3</fullName>
        <shortName>SPT 3</shortName>
        <shortName>SPT3</shortName>
    </alternativeName>
</protein>
<reference key="1">
    <citation type="journal article" date="1998" name="Science">
        <title>Genome sequence of the nematode C. elegans: a platform for investigating biology.</title>
        <authorList>
            <consortium name="The C. elegans sequencing consortium"/>
        </authorList>
    </citation>
    <scope>NUCLEOTIDE SEQUENCE [LARGE SCALE GENOMIC DNA]</scope>
    <scope>ALTERNATIVE SPLICING</scope>
    <source>
        <strain>Bristol N2</strain>
    </source>
</reference>
<reference key="2">
    <citation type="journal article" date="2011" name="Nat. Cell Biol.">
        <title>Apicobasal domain identities of expanding tubular membranes depend on glycosphingolipid biosynthesis.</title>
        <authorList>
            <person name="Zhang H."/>
            <person name="Abraham N."/>
            <person name="Khan L.A."/>
            <person name="Hall D.H."/>
            <person name="Fleming J.T."/>
            <person name="Gobel V."/>
        </authorList>
    </citation>
    <scope>FUNCTION</scope>
</reference>
<accession>Q9XVI6</accession>
<accession>H9G307</accession>
<feature type="chain" id="PRO_0000421273" description="Serine palmitoyltransferase 3">
    <location>
        <begin position="1"/>
        <end position="512"/>
    </location>
</feature>
<feature type="modified residue" description="N6-(pyridoxal phosphate)lysine" evidence="1">
    <location>
        <position position="345"/>
    </location>
</feature>
<feature type="splice variant" id="VSP_045380" description="In isoform b." evidence="3">
    <original>M</original>
    <variation>MSSCFVFYNM</variation>
    <location>
        <position position="1"/>
    </location>
</feature>
<gene>
    <name type="primary">sptl-3</name>
    <name type="ORF">T22G5.5</name>
</gene>